<comment type="function">
    <text evidence="1">One of the primary rRNA binding proteins, it binds directly to 16S rRNA where it helps nucleate assembly of the platform of the 30S subunit by binding and bridging several RNA helices of the 16S rRNA.</text>
</comment>
<comment type="function">
    <text evidence="1">Forms an intersubunit bridge (bridge B4) with the 23S rRNA of the 50S subunit in the ribosome.</text>
</comment>
<comment type="subunit">
    <text evidence="1">Part of the 30S ribosomal subunit. Forms a bridge to the 50S subunit in the 70S ribosome, contacting the 23S rRNA.</text>
</comment>
<comment type="similarity">
    <text evidence="1">Belongs to the universal ribosomal protein uS15 family.</text>
</comment>
<evidence type="ECO:0000255" key="1">
    <source>
        <dbReference type="HAMAP-Rule" id="MF_01343"/>
    </source>
</evidence>
<evidence type="ECO:0000305" key="2"/>
<proteinExistence type="inferred from homology"/>
<accession>B9M1G4</accession>
<gene>
    <name evidence="1" type="primary">rpsO</name>
    <name type="ordered locus">Geob_2696</name>
</gene>
<sequence>MLATDKKQEIIGAYKLHDSDTGSPEVQIAILTERITYLTEHFKTHKKDHHSRRGLLKIVGQRRGLLDYLKKKDVERYRSIIEKLGIRR</sequence>
<dbReference type="EMBL" id="CP001390">
    <property type="protein sequence ID" value="ACM21046.1"/>
    <property type="molecule type" value="Genomic_DNA"/>
</dbReference>
<dbReference type="RefSeq" id="WP_012647774.1">
    <property type="nucleotide sequence ID" value="NC_011979.1"/>
</dbReference>
<dbReference type="SMR" id="B9M1G4"/>
<dbReference type="STRING" id="316067.Geob_2696"/>
<dbReference type="KEGG" id="geo:Geob_2696"/>
<dbReference type="eggNOG" id="COG0184">
    <property type="taxonomic scope" value="Bacteria"/>
</dbReference>
<dbReference type="HOGENOM" id="CLU_148518_0_0_7"/>
<dbReference type="OrthoDB" id="9799262at2"/>
<dbReference type="Proteomes" id="UP000007721">
    <property type="component" value="Chromosome"/>
</dbReference>
<dbReference type="GO" id="GO:0022627">
    <property type="term" value="C:cytosolic small ribosomal subunit"/>
    <property type="evidence" value="ECO:0007669"/>
    <property type="project" value="TreeGrafter"/>
</dbReference>
<dbReference type="GO" id="GO:0019843">
    <property type="term" value="F:rRNA binding"/>
    <property type="evidence" value="ECO:0007669"/>
    <property type="project" value="UniProtKB-UniRule"/>
</dbReference>
<dbReference type="GO" id="GO:0003735">
    <property type="term" value="F:structural constituent of ribosome"/>
    <property type="evidence" value="ECO:0007669"/>
    <property type="project" value="InterPro"/>
</dbReference>
<dbReference type="GO" id="GO:0006412">
    <property type="term" value="P:translation"/>
    <property type="evidence" value="ECO:0007669"/>
    <property type="project" value="UniProtKB-UniRule"/>
</dbReference>
<dbReference type="CDD" id="cd00353">
    <property type="entry name" value="Ribosomal_S15p_S13e"/>
    <property type="match status" value="1"/>
</dbReference>
<dbReference type="FunFam" id="1.10.287.10:FF:000002">
    <property type="entry name" value="30S ribosomal protein S15"/>
    <property type="match status" value="1"/>
</dbReference>
<dbReference type="Gene3D" id="6.10.250.3130">
    <property type="match status" value="1"/>
</dbReference>
<dbReference type="Gene3D" id="1.10.287.10">
    <property type="entry name" value="S15/NS1, RNA-binding"/>
    <property type="match status" value="1"/>
</dbReference>
<dbReference type="HAMAP" id="MF_01343_B">
    <property type="entry name" value="Ribosomal_uS15_B"/>
    <property type="match status" value="1"/>
</dbReference>
<dbReference type="InterPro" id="IPR000589">
    <property type="entry name" value="Ribosomal_uS15"/>
</dbReference>
<dbReference type="InterPro" id="IPR005290">
    <property type="entry name" value="Ribosomal_uS15_bac-type"/>
</dbReference>
<dbReference type="InterPro" id="IPR009068">
    <property type="entry name" value="uS15_NS1_RNA-bd_sf"/>
</dbReference>
<dbReference type="NCBIfam" id="TIGR00952">
    <property type="entry name" value="S15_bact"/>
    <property type="match status" value="1"/>
</dbReference>
<dbReference type="PANTHER" id="PTHR23321">
    <property type="entry name" value="RIBOSOMAL PROTEIN S15, BACTERIAL AND ORGANELLAR"/>
    <property type="match status" value="1"/>
</dbReference>
<dbReference type="PANTHER" id="PTHR23321:SF26">
    <property type="entry name" value="SMALL RIBOSOMAL SUBUNIT PROTEIN US15M"/>
    <property type="match status" value="1"/>
</dbReference>
<dbReference type="Pfam" id="PF00312">
    <property type="entry name" value="Ribosomal_S15"/>
    <property type="match status" value="1"/>
</dbReference>
<dbReference type="SMART" id="SM01387">
    <property type="entry name" value="Ribosomal_S15"/>
    <property type="match status" value="1"/>
</dbReference>
<dbReference type="SUPFAM" id="SSF47060">
    <property type="entry name" value="S15/NS1 RNA-binding domain"/>
    <property type="match status" value="1"/>
</dbReference>
<dbReference type="PROSITE" id="PS00362">
    <property type="entry name" value="RIBOSOMAL_S15"/>
    <property type="match status" value="1"/>
</dbReference>
<keyword id="KW-1185">Reference proteome</keyword>
<keyword id="KW-0687">Ribonucleoprotein</keyword>
<keyword id="KW-0689">Ribosomal protein</keyword>
<keyword id="KW-0694">RNA-binding</keyword>
<keyword id="KW-0699">rRNA-binding</keyword>
<protein>
    <recommendedName>
        <fullName evidence="1">Small ribosomal subunit protein uS15</fullName>
    </recommendedName>
    <alternativeName>
        <fullName evidence="2">30S ribosomal protein S15</fullName>
    </alternativeName>
</protein>
<organism>
    <name type="scientific">Geotalea daltonii (strain DSM 22248 / JCM 15807 / FRC-32)</name>
    <name type="common">Geobacter daltonii</name>
    <dbReference type="NCBI Taxonomy" id="316067"/>
    <lineage>
        <taxon>Bacteria</taxon>
        <taxon>Pseudomonadati</taxon>
        <taxon>Thermodesulfobacteriota</taxon>
        <taxon>Desulfuromonadia</taxon>
        <taxon>Geobacterales</taxon>
        <taxon>Geobacteraceae</taxon>
        <taxon>Geotalea</taxon>
    </lineage>
</organism>
<reference key="1">
    <citation type="submission" date="2009-01" db="EMBL/GenBank/DDBJ databases">
        <title>Complete sequence of Geobacter sp. FRC-32.</title>
        <authorList>
            <consortium name="US DOE Joint Genome Institute"/>
            <person name="Lucas S."/>
            <person name="Copeland A."/>
            <person name="Lapidus A."/>
            <person name="Glavina del Rio T."/>
            <person name="Dalin E."/>
            <person name="Tice H."/>
            <person name="Bruce D."/>
            <person name="Goodwin L."/>
            <person name="Pitluck S."/>
            <person name="Saunders E."/>
            <person name="Brettin T."/>
            <person name="Detter J.C."/>
            <person name="Han C."/>
            <person name="Larimer F."/>
            <person name="Land M."/>
            <person name="Hauser L."/>
            <person name="Kyrpides N."/>
            <person name="Ovchinnikova G."/>
            <person name="Kostka J."/>
            <person name="Richardson P."/>
        </authorList>
    </citation>
    <scope>NUCLEOTIDE SEQUENCE [LARGE SCALE GENOMIC DNA]</scope>
    <source>
        <strain>DSM 22248 / JCM 15807 / FRC-32</strain>
    </source>
</reference>
<feature type="chain" id="PRO_1000166422" description="Small ribosomal subunit protein uS15">
    <location>
        <begin position="1"/>
        <end position="88"/>
    </location>
</feature>
<name>RS15_GEODF</name>